<sequence>AESSAMKFERQHVDSGGSSSSNANYCNEMMKKREMTKDRCKPVNTFVHEPLAEVQAVCSQRNVSCKNGQTNCYQSYSSMHITECRLTSGSKFPNCSYRTSQAQKSIIVACEGKPYVPVHFDNSV</sequence>
<accession>P00678</accession>
<proteinExistence type="evidence at protein level"/>
<keyword id="KW-0903">Direct protein sequencing</keyword>
<keyword id="KW-1015">Disulfide bond</keyword>
<keyword id="KW-0255">Endonuclease</keyword>
<keyword id="KW-0378">Hydrolase</keyword>
<keyword id="KW-0456">Lyase</keyword>
<keyword id="KW-0540">Nuclease</keyword>
<keyword id="KW-1185">Reference proteome</keyword>
<keyword id="KW-0964">Secreted</keyword>
<comment type="catalytic activity">
    <reaction>
        <text>an [RNA] containing cytidine + H2O = an [RNA]-3'-cytidine-3'-phosphate + a 5'-hydroxy-ribonucleotide-3'-[RNA].</text>
        <dbReference type="EC" id="4.6.1.18"/>
    </reaction>
</comment>
<comment type="catalytic activity">
    <reaction>
        <text>an [RNA] containing uridine + H2O = an [RNA]-3'-uridine-3'-phosphate + a 5'-hydroxy-ribonucleotide-3'-[RNA].</text>
        <dbReference type="EC" id="4.6.1.18"/>
    </reaction>
</comment>
<comment type="subcellular location">
    <subcellularLocation>
        <location>Secreted</location>
    </subcellularLocation>
</comment>
<comment type="tissue specificity">
    <text>Pancreas.</text>
</comment>
<comment type="similarity">
    <text evidence="3">Belongs to the pancreatic ribonuclease family.</text>
</comment>
<dbReference type="EC" id="4.6.1.18"/>
<dbReference type="PIR" id="A00825">
    <property type="entry name" value="NRGPA"/>
</dbReference>
<dbReference type="SMR" id="P00678"/>
<dbReference type="eggNOG" id="ENOG502SQ4K">
    <property type="taxonomic scope" value="Eukaryota"/>
</dbReference>
<dbReference type="InParanoid" id="P00678"/>
<dbReference type="Proteomes" id="UP000005447">
    <property type="component" value="Unassembled WGS sequence"/>
</dbReference>
<dbReference type="GO" id="GO:0005576">
    <property type="term" value="C:extracellular region"/>
    <property type="evidence" value="ECO:0007669"/>
    <property type="project" value="UniProtKB-SubCell"/>
</dbReference>
<dbReference type="GO" id="GO:0016829">
    <property type="term" value="F:lyase activity"/>
    <property type="evidence" value="ECO:0007669"/>
    <property type="project" value="UniProtKB-KW"/>
</dbReference>
<dbReference type="GO" id="GO:0003676">
    <property type="term" value="F:nucleic acid binding"/>
    <property type="evidence" value="ECO:0007669"/>
    <property type="project" value="InterPro"/>
</dbReference>
<dbReference type="GO" id="GO:0004522">
    <property type="term" value="F:ribonuclease A activity"/>
    <property type="evidence" value="ECO:0007669"/>
    <property type="project" value="UniProtKB-EC"/>
</dbReference>
<dbReference type="GO" id="GO:0050830">
    <property type="term" value="P:defense response to Gram-positive bacterium"/>
    <property type="evidence" value="ECO:0007669"/>
    <property type="project" value="TreeGrafter"/>
</dbReference>
<dbReference type="CDD" id="cd06265">
    <property type="entry name" value="RNase_A_canonical"/>
    <property type="match status" value="1"/>
</dbReference>
<dbReference type="FunFam" id="3.10.130.10:FF:000001">
    <property type="entry name" value="Ribonuclease pancreatic"/>
    <property type="match status" value="1"/>
</dbReference>
<dbReference type="Gene3D" id="3.10.130.10">
    <property type="entry name" value="Ribonuclease A-like domain"/>
    <property type="match status" value="1"/>
</dbReference>
<dbReference type="InterPro" id="IPR001427">
    <property type="entry name" value="RNaseA"/>
</dbReference>
<dbReference type="InterPro" id="IPR036816">
    <property type="entry name" value="RNaseA-like_dom_sf"/>
</dbReference>
<dbReference type="InterPro" id="IPR023411">
    <property type="entry name" value="RNaseA_AS"/>
</dbReference>
<dbReference type="InterPro" id="IPR023412">
    <property type="entry name" value="RNaseA_domain"/>
</dbReference>
<dbReference type="PANTHER" id="PTHR11437">
    <property type="entry name" value="RIBONUCLEASE"/>
    <property type="match status" value="1"/>
</dbReference>
<dbReference type="PANTHER" id="PTHR11437:SF24">
    <property type="entry name" value="RIBONUCLEASE PANCREATIC"/>
    <property type="match status" value="1"/>
</dbReference>
<dbReference type="Pfam" id="PF00074">
    <property type="entry name" value="RnaseA"/>
    <property type="match status" value="1"/>
</dbReference>
<dbReference type="PRINTS" id="PR00794">
    <property type="entry name" value="RIBONUCLEASE"/>
</dbReference>
<dbReference type="SMART" id="SM00092">
    <property type="entry name" value="RNAse_Pc"/>
    <property type="match status" value="1"/>
</dbReference>
<dbReference type="SUPFAM" id="SSF54076">
    <property type="entry name" value="RNase A-like"/>
    <property type="match status" value="1"/>
</dbReference>
<dbReference type="PROSITE" id="PS00127">
    <property type="entry name" value="RNASE_PANCREATIC"/>
    <property type="match status" value="1"/>
</dbReference>
<name>RNS1A_CAVPO</name>
<organism>
    <name type="scientific">Cavia porcellus</name>
    <name type="common">Guinea pig</name>
    <dbReference type="NCBI Taxonomy" id="10141"/>
    <lineage>
        <taxon>Eukaryota</taxon>
        <taxon>Metazoa</taxon>
        <taxon>Chordata</taxon>
        <taxon>Craniata</taxon>
        <taxon>Vertebrata</taxon>
        <taxon>Euteleostomi</taxon>
        <taxon>Mammalia</taxon>
        <taxon>Eutheria</taxon>
        <taxon>Euarchontoglires</taxon>
        <taxon>Glires</taxon>
        <taxon>Rodentia</taxon>
        <taxon>Hystricomorpha</taxon>
        <taxon>Caviidae</taxon>
        <taxon>Cavia</taxon>
    </lineage>
</organism>
<feature type="chain" id="PRO_0000057188" description="Ribonuclease pancreatic A">
    <location>
        <begin position="1"/>
        <end position="124"/>
    </location>
</feature>
<feature type="region of interest" description="Disordered" evidence="2">
    <location>
        <begin position="1"/>
        <end position="24"/>
    </location>
</feature>
<feature type="active site" description="Proton acceptor" evidence="1">
    <location>
        <position position="12"/>
    </location>
</feature>
<feature type="active site" description="Proton donor" evidence="1">
    <location>
        <position position="119"/>
    </location>
</feature>
<feature type="binding site" evidence="1">
    <location>
        <position position="7"/>
    </location>
    <ligand>
        <name>substrate</name>
    </ligand>
</feature>
<feature type="binding site" evidence="1">
    <location>
        <position position="10"/>
    </location>
    <ligand>
        <name>substrate</name>
    </ligand>
</feature>
<feature type="binding site" evidence="1">
    <location>
        <begin position="41"/>
        <end position="45"/>
    </location>
    <ligand>
        <name>substrate</name>
    </ligand>
</feature>
<feature type="binding site" evidence="1">
    <location>
        <position position="66"/>
    </location>
    <ligand>
        <name>substrate</name>
    </ligand>
</feature>
<feature type="binding site" evidence="1">
    <location>
        <position position="85"/>
    </location>
    <ligand>
        <name>substrate</name>
    </ligand>
</feature>
<feature type="disulfide bond" evidence="1">
    <location>
        <begin position="26"/>
        <end position="84"/>
    </location>
</feature>
<feature type="disulfide bond" evidence="1">
    <location>
        <begin position="40"/>
        <end position="95"/>
    </location>
</feature>
<feature type="disulfide bond" evidence="1">
    <location>
        <begin position="58"/>
        <end position="110"/>
    </location>
</feature>
<feature type="disulfide bond" evidence="1">
    <location>
        <begin position="65"/>
        <end position="72"/>
    </location>
</feature>
<evidence type="ECO:0000250" key="1"/>
<evidence type="ECO:0000256" key="2">
    <source>
        <dbReference type="SAM" id="MobiDB-lite"/>
    </source>
</evidence>
<evidence type="ECO:0000305" key="3"/>
<protein>
    <recommendedName>
        <fullName>Ribonuclease pancreatic A</fullName>
        <shortName>RNase IA</shortName>
        <ecNumber>4.6.1.18</ecNumber>
    </recommendedName>
</protein>
<reference key="1">
    <citation type="journal article" date="1977" name="Eur. J. Biochem.">
        <title>Guinea-pig pancreatic ribonucleases. Isolation, properties, primary structure and glycosidation.</title>
        <authorList>
            <person name="van den Berg A."/>
            <person name="van den Hende-Timmer L."/>
            <person name="Hofsteenge J."/>
            <person name="Gaastra W."/>
            <person name="Beintema J.J."/>
        </authorList>
    </citation>
    <scope>PROTEIN SEQUENCE</scope>
    <source>
        <tissue>Pancreas</tissue>
    </source>
</reference>